<gene>
    <name type="primary">TAF7</name>
</gene>
<sequence length="349" mass="40268">MSKSKDDAPHELESQFILRLPPEYASTVRRAVQSGHVNLKDRLSIELHPDGRHGIVRVDRVPLAAKLVDLPRVMESLKTIDKKTFYKTADVCQMLVSTVDGDLYPPVEEPVATADPKASKKKDKDKEKKFVWNHGITLPLKNVRKRRFRKTAKKKYIESPDVEKEVKRLLSTDAEAVSTRWEIIAEDETKETENQGLDISSPGMSGHRQGHDSLEHDELREIFNDLSSSSEDEDETQHQDEEDINIIDTEEDLERQLQDKLNESDEQHQENEGTNQLVMGIQKQIDNMKGKLQETQDRAKRQEDLIMKVENLALKNRFQAVLDELKQKEDREKEQLSSLQEELESLLEK</sequence>
<keyword id="KW-0175">Coiled coil</keyword>
<keyword id="KW-0539">Nucleus</keyword>
<keyword id="KW-0597">Phosphoprotein</keyword>
<keyword id="KW-1185">Reference proteome</keyword>
<keyword id="KW-0804">Transcription</keyword>
<keyword id="KW-0805">Transcription regulation</keyword>
<keyword id="KW-0832">Ubl conjugation</keyword>
<evidence type="ECO:0000250" key="1">
    <source>
        <dbReference type="UniProtKB" id="Q15545"/>
    </source>
</evidence>
<evidence type="ECO:0000250" key="2">
    <source>
        <dbReference type="UniProtKB" id="Q9R1C0"/>
    </source>
</evidence>
<evidence type="ECO:0000255" key="3"/>
<evidence type="ECO:0000256" key="4">
    <source>
        <dbReference type="SAM" id="MobiDB-lite"/>
    </source>
</evidence>
<evidence type="ECO:0000305" key="5"/>
<feature type="chain" id="PRO_0000293543" description="Transcription initiation factor TFIID subunit 7">
    <location>
        <begin position="1"/>
        <end position="349"/>
    </location>
</feature>
<feature type="region of interest" description="Disordered" evidence="4">
    <location>
        <begin position="107"/>
        <end position="126"/>
    </location>
</feature>
<feature type="region of interest" description="Disordered" evidence="4">
    <location>
        <begin position="185"/>
        <end position="212"/>
    </location>
</feature>
<feature type="region of interest" description="Disordered" evidence="4">
    <location>
        <begin position="227"/>
        <end position="247"/>
    </location>
</feature>
<feature type="coiled-coil region" evidence="3">
    <location>
        <begin position="244"/>
        <end position="349"/>
    </location>
</feature>
<feature type="compositionally biased region" description="Acidic residues" evidence="4">
    <location>
        <begin position="230"/>
        <end position="247"/>
    </location>
</feature>
<feature type="modified residue" description="Phosphoserine" evidence="1">
    <location>
        <position position="171"/>
    </location>
</feature>
<feature type="modified residue" description="Phosphoserine" evidence="1">
    <location>
        <position position="200"/>
    </location>
</feature>
<feature type="modified residue" description="Phosphoserine" evidence="1">
    <location>
        <position position="201"/>
    </location>
</feature>
<feature type="modified residue" description="Phosphoserine" evidence="1">
    <location>
        <position position="213"/>
    </location>
</feature>
<feature type="modified residue" description="Phosphoserine" evidence="1">
    <location>
        <position position="264"/>
    </location>
</feature>
<organism>
    <name type="scientific">Bos taurus</name>
    <name type="common">Bovine</name>
    <dbReference type="NCBI Taxonomy" id="9913"/>
    <lineage>
        <taxon>Eukaryota</taxon>
        <taxon>Metazoa</taxon>
        <taxon>Chordata</taxon>
        <taxon>Craniata</taxon>
        <taxon>Vertebrata</taxon>
        <taxon>Euteleostomi</taxon>
        <taxon>Mammalia</taxon>
        <taxon>Eutheria</taxon>
        <taxon>Laurasiatheria</taxon>
        <taxon>Artiodactyla</taxon>
        <taxon>Ruminantia</taxon>
        <taxon>Pecora</taxon>
        <taxon>Bovidae</taxon>
        <taxon>Bovinae</taxon>
        <taxon>Bos</taxon>
    </lineage>
</organism>
<accession>Q2HJG8</accession>
<comment type="function">
    <text evidence="1">The TFIID basal transcription factor complex plays a major role in the initiation of RNA polymerase II (Pol II)-dependent transcription. TFIID recognizes and binds promoters with or without a TATA box via its subunit TBP, a TATA-box-binding protein, and promotes assembly of the pre-initiation complex (PIC). The TFIID complex consists of TBP and TBP-associated factors (TAFs), including TAF1, TAF2, TAF3, TAF4, TAF5, TAF6, TAF7, TAF8, TAF9, TAF10, TAF11, TAF12 and TAF13. TAF7 forms a promoter DNA binding subcomplex of TFIID, together with TAF1 and TAF2. Part of a TFIID complex containing TAF10 (TFIID alpha) and a TFIID complex lacking TAF10 (TFIID beta).</text>
</comment>
<comment type="subunit">
    <text evidence="1">Component of the TFIID basal transcription factor complex, composed of TATA-box-binding protein TBP, and a number of TBP-associated factors (TAFs), including TAF1, TAF2, TAF3, TAF4, TAF5, TAF6, TAF7, TAF8, TAF9, TAF10, TAF11, TAF12 and TAF13. Part of a TFIID-containing RNA polymerase II pre-initiation complex that is composed of TBP and at least GTF2A1, GTF2A2, GTF2E1, GTF2E2, GTF2F1, GTF2H2, GTF2H3, GTF2H4, GTF2H5, GTF2B, TCEA1, ERCC2, ERCC3, TAF1, TAF2, TAF3, TAF4, TAF5, TAF6, TAF7, TAF8, TAF9, TAF10, TAF11, TAF12 and TAF13. Interacts with TAF1; the interaction is direct. Interacts with TAF1, TAF5, TAF11, TAF12, and TAF13, but not with TAF10 or TBP. Component of some MLL1/MLL complex, at least composed of the core components KMT2A/MLL1, ASH2L, HCFC1/HCF1, WDR5 and RBBP5, as well as the facultative components BACC1, CHD8, E2F6, HSP70, INO80C, KANSL1, LAS1L, MAX, MCRS1, MGA, MYST1/MOF, PELP1, PHF20, PRP31, RING2, RUVB1/TIP49A, RUVB2/TIP49B, SENP3, TAF1, TAF4, TAF6, TAF7, TAF9 and TEX10. Interacts with CIITA and TAF1 and inhibits their acetyltransferase activity, and behaving as a repressor of CIITA- and TAF1-regulated promoters.</text>
</comment>
<comment type="subcellular location">
    <subcellularLocation>
        <location evidence="2">Nucleus</location>
    </subcellularLocation>
</comment>
<comment type="PTM">
    <text evidence="1">Phosphorylated by CIITA. Phosphorylation at Ser-264 by TAF1 in early G1 phase disrupts binding to TAF1.</text>
</comment>
<comment type="PTM">
    <text evidence="1">Ubiquitinated by TRIM26; leading to proteasomal degradation.</text>
</comment>
<comment type="similarity">
    <text evidence="5">Belongs to the TAF7 family.</text>
</comment>
<dbReference type="EMBL" id="BC105412">
    <property type="protein sequence ID" value="AAI05413.1"/>
    <property type="molecule type" value="mRNA"/>
</dbReference>
<dbReference type="RefSeq" id="NP_001039493.1">
    <property type="nucleotide sequence ID" value="NM_001046028.2"/>
</dbReference>
<dbReference type="SMR" id="Q2HJG8"/>
<dbReference type="FunCoup" id="Q2HJG8">
    <property type="interactions" value="2791"/>
</dbReference>
<dbReference type="PaxDb" id="9913-ENSBTAP00000040614"/>
<dbReference type="GeneID" id="509327"/>
<dbReference type="KEGG" id="bta:509327"/>
<dbReference type="CTD" id="6879"/>
<dbReference type="eggNOG" id="KOG4011">
    <property type="taxonomic scope" value="Eukaryota"/>
</dbReference>
<dbReference type="InParanoid" id="Q2HJG8"/>
<dbReference type="OrthoDB" id="153872at2759"/>
<dbReference type="Proteomes" id="UP000009136">
    <property type="component" value="Unplaced"/>
</dbReference>
<dbReference type="GO" id="GO:0071339">
    <property type="term" value="C:MLL1 complex"/>
    <property type="evidence" value="ECO:0000250"/>
    <property type="project" value="UniProtKB"/>
</dbReference>
<dbReference type="GO" id="GO:0005669">
    <property type="term" value="C:transcription factor TFIID complex"/>
    <property type="evidence" value="ECO:0000250"/>
    <property type="project" value="UniProtKB"/>
</dbReference>
<dbReference type="GO" id="GO:0006357">
    <property type="term" value="P:regulation of transcription by RNA polymerase II"/>
    <property type="evidence" value="ECO:0000318"/>
    <property type="project" value="GO_Central"/>
</dbReference>
<dbReference type="GO" id="GO:0051123">
    <property type="term" value="P:RNA polymerase II preinitiation complex assembly"/>
    <property type="evidence" value="ECO:0000318"/>
    <property type="project" value="GO_Central"/>
</dbReference>
<dbReference type="CDD" id="cd08047">
    <property type="entry name" value="TAF7"/>
    <property type="match status" value="1"/>
</dbReference>
<dbReference type="InterPro" id="IPR037817">
    <property type="entry name" value="TAF7"/>
</dbReference>
<dbReference type="InterPro" id="IPR006751">
    <property type="entry name" value="TAFII55_prot_cons_reg"/>
</dbReference>
<dbReference type="PANTHER" id="PTHR12228">
    <property type="entry name" value="TRANSCRIPTION INITIATION FACTOR TFIID 55 KD SUBUNIT-RELATED"/>
    <property type="match status" value="1"/>
</dbReference>
<dbReference type="PANTHER" id="PTHR12228:SF6">
    <property type="entry name" value="TRANSCRIPTION INITIATION FACTOR TFIID SUBUNIT 7"/>
    <property type="match status" value="1"/>
</dbReference>
<dbReference type="Pfam" id="PF04658">
    <property type="entry name" value="TAFII55_N"/>
    <property type="match status" value="1"/>
</dbReference>
<dbReference type="SMART" id="SM01370">
    <property type="entry name" value="TAFII55_N"/>
    <property type="match status" value="1"/>
</dbReference>
<protein>
    <recommendedName>
        <fullName>Transcription initiation factor TFIID subunit 7</fullName>
    </recommendedName>
</protein>
<name>TAF7_BOVIN</name>
<proteinExistence type="evidence at transcript level"/>
<reference key="1">
    <citation type="submission" date="2005-09" db="EMBL/GenBank/DDBJ databases">
        <authorList>
            <consortium name="NIH - Mammalian Gene Collection (MGC) project"/>
        </authorList>
    </citation>
    <scope>NUCLEOTIDE SEQUENCE [LARGE SCALE MRNA]</scope>
    <source>
        <strain>Hereford</strain>
        <tissue>Thymus</tissue>
    </source>
</reference>